<gene>
    <name type="primary">aI1</name>
</gene>
<keyword id="KW-0255">Endonuclease</keyword>
<keyword id="KW-0378">Hydrolase</keyword>
<keyword id="KW-0404">Intron homing</keyword>
<keyword id="KW-0496">Mitochondrion</keyword>
<keyword id="KW-0540">Nuclease</keyword>
<keyword id="KW-1185">Reference proteome</keyword>
<accession>Q0H8X7</accession>
<dbReference type="EC" id="3.1.-.-"/>
<dbReference type="EMBL" id="DQ157700">
    <property type="protein sequence ID" value="AAZ67029.1"/>
    <property type="molecule type" value="Genomic_DNA"/>
</dbReference>
<dbReference type="EMBL" id="AACP01000277">
    <property type="status" value="NOT_ANNOTATED_CDS"/>
    <property type="molecule type" value="Genomic_DNA"/>
</dbReference>
<dbReference type="SMR" id="Q0H8X7"/>
<dbReference type="InParanoid" id="Q0H8X7"/>
<dbReference type="Proteomes" id="UP000000561">
    <property type="component" value="Mitochondrion"/>
</dbReference>
<dbReference type="GO" id="GO:0005739">
    <property type="term" value="C:mitochondrion"/>
    <property type="evidence" value="ECO:0007669"/>
    <property type="project" value="UniProtKB-SubCell"/>
</dbReference>
<dbReference type="GO" id="GO:0004519">
    <property type="term" value="F:endonuclease activity"/>
    <property type="evidence" value="ECO:0007669"/>
    <property type="project" value="UniProtKB-KW"/>
</dbReference>
<dbReference type="GO" id="GO:0006314">
    <property type="term" value="P:intron homing"/>
    <property type="evidence" value="ECO:0007669"/>
    <property type="project" value="UniProtKB-KW"/>
</dbReference>
<dbReference type="Gene3D" id="3.10.28.10">
    <property type="entry name" value="Homing endonucleases"/>
    <property type="match status" value="1"/>
</dbReference>
<dbReference type="InterPro" id="IPR027434">
    <property type="entry name" value="Homing_endonucl"/>
</dbReference>
<dbReference type="InterPro" id="IPR004860">
    <property type="entry name" value="LAGLIDADG_dom"/>
</dbReference>
<dbReference type="InterPro" id="IPR051289">
    <property type="entry name" value="LAGLIDADG_Endonuclease"/>
</dbReference>
<dbReference type="PANTHER" id="PTHR36181:SF3">
    <property type="entry name" value="INTRON-ENCODED DNA ENDONUCLEASE AI5 BETA"/>
    <property type="match status" value="1"/>
</dbReference>
<dbReference type="PANTHER" id="PTHR36181">
    <property type="entry name" value="INTRON-ENCODED ENDONUCLEASE AI3-RELATED"/>
    <property type="match status" value="1"/>
</dbReference>
<dbReference type="Pfam" id="PF00961">
    <property type="entry name" value="LAGLIDADG_1"/>
    <property type="match status" value="1"/>
</dbReference>
<dbReference type="SUPFAM" id="SSF55608">
    <property type="entry name" value="Homing endonucleases"/>
    <property type="match status" value="1"/>
</dbReference>
<name>AI1_MYCMD</name>
<feature type="chain" id="PRO_0000271152" description="Probable intron-encoded DNA endonuclease aI1">
    <location>
        <begin position="1"/>
        <end position="121"/>
    </location>
</feature>
<evidence type="ECO:0000250" key="1"/>
<evidence type="ECO:0000305" key="2"/>
<comment type="function">
    <text evidence="1">Mitochondrial DNA endonuclease involved in intron homing.</text>
</comment>
<comment type="subcellular location">
    <subcellularLocation>
        <location>Mitochondrion</location>
    </subcellularLocation>
</comment>
<comment type="miscellaneous">
    <text>Encoded within intron 1 of COX1.</text>
</comment>
<comment type="similarity">
    <text evidence="2">Belongs to the LAGLIDADG endonuclease family.</text>
</comment>
<reference key="1">
    <citation type="submission" date="2005-08" db="EMBL/GenBank/DDBJ databases">
        <title>Annotation of mitochondrial genome of Ustilago maydis and comparative analysis of basidiomycete mtDNAs.</title>
        <authorList>
            <person name="Kennell J.C."/>
            <person name="Boehmer C."/>
        </authorList>
    </citation>
    <scope>NUCLEOTIDE SEQUENCE [LARGE SCALE GENOMIC DNA]</scope>
    <source>
        <strain>DSM 14603 / FGSC 9021 / UM521</strain>
    </source>
</reference>
<reference key="2">
    <citation type="journal article" date="2006" name="Nature">
        <title>Insights from the genome of the biotrophic fungal plant pathogen Ustilago maydis.</title>
        <authorList>
            <person name="Kaemper J."/>
            <person name="Kahmann R."/>
            <person name="Boelker M."/>
            <person name="Ma L.-J."/>
            <person name="Brefort T."/>
            <person name="Saville B.J."/>
            <person name="Banuett F."/>
            <person name="Kronstad J.W."/>
            <person name="Gold S.E."/>
            <person name="Mueller O."/>
            <person name="Perlin M.H."/>
            <person name="Woesten H.A.B."/>
            <person name="de Vries R."/>
            <person name="Ruiz-Herrera J."/>
            <person name="Reynaga-Pena C.G."/>
            <person name="Snetselaar K."/>
            <person name="McCann M."/>
            <person name="Perez-Martin J."/>
            <person name="Feldbruegge M."/>
            <person name="Basse C.W."/>
            <person name="Steinberg G."/>
            <person name="Ibeas J.I."/>
            <person name="Holloman W."/>
            <person name="Guzman P."/>
            <person name="Farman M.L."/>
            <person name="Stajich J.E."/>
            <person name="Sentandreu R."/>
            <person name="Gonzalez-Prieto J.M."/>
            <person name="Kennell J.C."/>
            <person name="Molina L."/>
            <person name="Schirawski J."/>
            <person name="Mendoza-Mendoza A."/>
            <person name="Greilinger D."/>
            <person name="Muench K."/>
            <person name="Roessel N."/>
            <person name="Scherer M."/>
            <person name="Vranes M."/>
            <person name="Ladendorf O."/>
            <person name="Vincon V."/>
            <person name="Fuchs U."/>
            <person name="Sandrock B."/>
            <person name="Meng S."/>
            <person name="Ho E.C.H."/>
            <person name="Cahill M.J."/>
            <person name="Boyce K.J."/>
            <person name="Klose J."/>
            <person name="Klosterman S.J."/>
            <person name="Deelstra H.J."/>
            <person name="Ortiz-Castellanos L."/>
            <person name="Li W."/>
            <person name="Sanchez-Alonso P."/>
            <person name="Schreier P.H."/>
            <person name="Haeuser-Hahn I."/>
            <person name="Vaupel M."/>
            <person name="Koopmann E."/>
            <person name="Friedrich G."/>
            <person name="Voss H."/>
            <person name="Schlueter T."/>
            <person name="Margolis J."/>
            <person name="Platt D."/>
            <person name="Swimmer C."/>
            <person name="Gnirke A."/>
            <person name="Chen F."/>
            <person name="Vysotskaia V."/>
            <person name="Mannhaupt G."/>
            <person name="Gueldener U."/>
            <person name="Muensterkoetter M."/>
            <person name="Haase D."/>
            <person name="Oesterheld M."/>
            <person name="Mewes H.-W."/>
            <person name="Mauceli E.W."/>
            <person name="DeCaprio D."/>
            <person name="Wade C.M."/>
            <person name="Butler J."/>
            <person name="Young S.K."/>
            <person name="Jaffe D.B."/>
            <person name="Calvo S.E."/>
            <person name="Nusbaum C."/>
            <person name="Galagan J.E."/>
            <person name="Birren B.W."/>
        </authorList>
    </citation>
    <scope>NUCLEOTIDE SEQUENCE [LARGE SCALE GENOMIC DNA]</scope>
    <source>
        <strain>DSM 14603 / FGSC 9021 / UM521</strain>
    </source>
</reference>
<protein>
    <recommendedName>
        <fullName>Probable intron-encoded DNA endonuclease aI1</fullName>
        <ecNumber>3.1.-.-</ecNumber>
    </recommendedName>
</protein>
<sequence>MEKERIELRLDYVLNSGKKTGKSYESILKLIAETFGVQLTTTIHNRNISYYLIAITSPAKLAILINYLNEYSLFTSKYLNFQDFSNCVNMMLNKEHLTISGREKITILKESMNNKRTYGII</sequence>
<proteinExistence type="inferred from homology"/>
<geneLocation type="mitochondrion"/>
<organism>
    <name type="scientific">Mycosarcoma maydis</name>
    <name type="common">Corn smut fungus</name>
    <name type="synonym">Ustilago maydis</name>
    <dbReference type="NCBI Taxonomy" id="5270"/>
    <lineage>
        <taxon>Eukaryota</taxon>
        <taxon>Fungi</taxon>
        <taxon>Dikarya</taxon>
        <taxon>Basidiomycota</taxon>
        <taxon>Ustilaginomycotina</taxon>
        <taxon>Ustilaginomycetes</taxon>
        <taxon>Ustilaginales</taxon>
        <taxon>Ustilaginaceae</taxon>
        <taxon>Mycosarcoma</taxon>
    </lineage>
</organism>